<feature type="chain" id="PRO_1000143942" description="Large ribosomal subunit protein uL6">
    <location>
        <begin position="1"/>
        <end position="180"/>
    </location>
</feature>
<protein>
    <recommendedName>
        <fullName evidence="1">Large ribosomal subunit protein uL6</fullName>
    </recommendedName>
    <alternativeName>
        <fullName evidence="2">50S ribosomal protein L6</fullName>
    </alternativeName>
</protein>
<reference key="1">
    <citation type="submission" date="2008-08" db="EMBL/GenBank/DDBJ databases">
        <title>Complete sequence of Anaeromyxobacter sp. K.</title>
        <authorList>
            <consortium name="US DOE Joint Genome Institute"/>
            <person name="Lucas S."/>
            <person name="Copeland A."/>
            <person name="Lapidus A."/>
            <person name="Glavina del Rio T."/>
            <person name="Dalin E."/>
            <person name="Tice H."/>
            <person name="Bruce D."/>
            <person name="Goodwin L."/>
            <person name="Pitluck S."/>
            <person name="Saunders E."/>
            <person name="Brettin T."/>
            <person name="Detter J.C."/>
            <person name="Han C."/>
            <person name="Larimer F."/>
            <person name="Land M."/>
            <person name="Hauser L."/>
            <person name="Kyrpides N."/>
            <person name="Ovchinnikiva G."/>
            <person name="Beliaev A."/>
        </authorList>
    </citation>
    <scope>NUCLEOTIDE SEQUENCE [LARGE SCALE GENOMIC DNA]</scope>
    <source>
        <strain>K</strain>
    </source>
</reference>
<accession>B4UBB4</accession>
<gene>
    <name evidence="1" type="primary">rplF</name>
    <name type="ordered locus">AnaeK_1948</name>
</gene>
<keyword id="KW-0687">Ribonucleoprotein</keyword>
<keyword id="KW-0689">Ribosomal protein</keyword>
<keyword id="KW-0694">RNA-binding</keyword>
<keyword id="KW-0699">rRNA-binding</keyword>
<proteinExistence type="inferred from homology"/>
<comment type="function">
    <text evidence="1">This protein binds to the 23S rRNA, and is important in its secondary structure. It is located near the subunit interface in the base of the L7/L12 stalk, and near the tRNA binding site of the peptidyltransferase center.</text>
</comment>
<comment type="subunit">
    <text evidence="1">Part of the 50S ribosomal subunit.</text>
</comment>
<comment type="similarity">
    <text evidence="1">Belongs to the universal ribosomal protein uL6 family.</text>
</comment>
<evidence type="ECO:0000255" key="1">
    <source>
        <dbReference type="HAMAP-Rule" id="MF_01365"/>
    </source>
</evidence>
<evidence type="ECO:0000305" key="2"/>
<dbReference type="EMBL" id="CP001131">
    <property type="protein sequence ID" value="ACG73176.1"/>
    <property type="molecule type" value="Genomic_DNA"/>
</dbReference>
<dbReference type="RefSeq" id="WP_012525982.1">
    <property type="nucleotide sequence ID" value="NC_011145.1"/>
</dbReference>
<dbReference type="SMR" id="B4UBB4"/>
<dbReference type="KEGG" id="ank:AnaeK_1948"/>
<dbReference type="HOGENOM" id="CLU_065464_1_2_7"/>
<dbReference type="OrthoDB" id="9805007at2"/>
<dbReference type="Proteomes" id="UP000001871">
    <property type="component" value="Chromosome"/>
</dbReference>
<dbReference type="GO" id="GO:0022625">
    <property type="term" value="C:cytosolic large ribosomal subunit"/>
    <property type="evidence" value="ECO:0007669"/>
    <property type="project" value="TreeGrafter"/>
</dbReference>
<dbReference type="GO" id="GO:0019843">
    <property type="term" value="F:rRNA binding"/>
    <property type="evidence" value="ECO:0007669"/>
    <property type="project" value="UniProtKB-UniRule"/>
</dbReference>
<dbReference type="GO" id="GO:0003735">
    <property type="term" value="F:structural constituent of ribosome"/>
    <property type="evidence" value="ECO:0007669"/>
    <property type="project" value="InterPro"/>
</dbReference>
<dbReference type="GO" id="GO:0002181">
    <property type="term" value="P:cytoplasmic translation"/>
    <property type="evidence" value="ECO:0007669"/>
    <property type="project" value="TreeGrafter"/>
</dbReference>
<dbReference type="FunFam" id="3.90.930.12:FF:000001">
    <property type="entry name" value="50S ribosomal protein L6"/>
    <property type="match status" value="1"/>
</dbReference>
<dbReference type="FunFam" id="3.90.930.12:FF:000002">
    <property type="entry name" value="50S ribosomal protein L6"/>
    <property type="match status" value="1"/>
</dbReference>
<dbReference type="Gene3D" id="3.90.930.12">
    <property type="entry name" value="Ribosomal protein L6, alpha-beta domain"/>
    <property type="match status" value="2"/>
</dbReference>
<dbReference type="HAMAP" id="MF_01365_B">
    <property type="entry name" value="Ribosomal_uL6_B"/>
    <property type="match status" value="1"/>
</dbReference>
<dbReference type="InterPro" id="IPR000702">
    <property type="entry name" value="Ribosomal_uL6-like"/>
</dbReference>
<dbReference type="InterPro" id="IPR036789">
    <property type="entry name" value="Ribosomal_uL6-like_a/b-dom_sf"/>
</dbReference>
<dbReference type="InterPro" id="IPR020040">
    <property type="entry name" value="Ribosomal_uL6_a/b-dom"/>
</dbReference>
<dbReference type="InterPro" id="IPR019906">
    <property type="entry name" value="Ribosomal_uL6_bac-type"/>
</dbReference>
<dbReference type="InterPro" id="IPR002358">
    <property type="entry name" value="Ribosomal_uL6_CS"/>
</dbReference>
<dbReference type="NCBIfam" id="TIGR03654">
    <property type="entry name" value="L6_bact"/>
    <property type="match status" value="1"/>
</dbReference>
<dbReference type="PANTHER" id="PTHR11655">
    <property type="entry name" value="60S/50S RIBOSOMAL PROTEIN L6/L9"/>
    <property type="match status" value="1"/>
</dbReference>
<dbReference type="PANTHER" id="PTHR11655:SF14">
    <property type="entry name" value="LARGE RIBOSOMAL SUBUNIT PROTEIN UL6M"/>
    <property type="match status" value="1"/>
</dbReference>
<dbReference type="Pfam" id="PF00347">
    <property type="entry name" value="Ribosomal_L6"/>
    <property type="match status" value="2"/>
</dbReference>
<dbReference type="PIRSF" id="PIRSF002162">
    <property type="entry name" value="Ribosomal_L6"/>
    <property type="match status" value="1"/>
</dbReference>
<dbReference type="PRINTS" id="PR00059">
    <property type="entry name" value="RIBOSOMALL6"/>
</dbReference>
<dbReference type="SUPFAM" id="SSF56053">
    <property type="entry name" value="Ribosomal protein L6"/>
    <property type="match status" value="2"/>
</dbReference>
<dbReference type="PROSITE" id="PS00525">
    <property type="entry name" value="RIBOSOMAL_L6_1"/>
    <property type="match status" value="1"/>
</dbReference>
<organism>
    <name type="scientific">Anaeromyxobacter sp. (strain K)</name>
    <dbReference type="NCBI Taxonomy" id="447217"/>
    <lineage>
        <taxon>Bacteria</taxon>
        <taxon>Pseudomonadati</taxon>
        <taxon>Myxococcota</taxon>
        <taxon>Myxococcia</taxon>
        <taxon>Myxococcales</taxon>
        <taxon>Cystobacterineae</taxon>
        <taxon>Anaeromyxobacteraceae</taxon>
        <taxon>Anaeromyxobacter</taxon>
    </lineage>
</organism>
<sequence>MSRVGKLPVKIPEKVKVSVDGNVVKVEGPKGKMHFPTNPLVSVQVDKGEVKVARQDESHVAKGLHGLTRTLVKNALEGVVKGYEKGLEINGVGFKAEVKGKDIHFTLGFSHPVVFKLPDGVTAEVDAKQTKLTIRSVDKHLLGLTAAKVRALRPPEPYKGKGIKYADETIRRKEGKTGAA</sequence>
<name>RL6_ANASK</name>